<comment type="function">
    <text evidence="2">Catalyzes the formation of N(7)-methylguanine at position 46 (m7G46) in tRNA.</text>
</comment>
<comment type="catalytic activity">
    <reaction evidence="2">
        <text>guanosine(46) in tRNA + S-adenosyl-L-methionine = N(7)-methylguanosine(46) in tRNA + S-adenosyl-L-homocysteine</text>
        <dbReference type="Rhea" id="RHEA:42708"/>
        <dbReference type="Rhea" id="RHEA-COMP:10188"/>
        <dbReference type="Rhea" id="RHEA-COMP:10189"/>
        <dbReference type="ChEBI" id="CHEBI:57856"/>
        <dbReference type="ChEBI" id="CHEBI:59789"/>
        <dbReference type="ChEBI" id="CHEBI:74269"/>
        <dbReference type="ChEBI" id="CHEBI:74480"/>
        <dbReference type="EC" id="2.1.1.33"/>
    </reaction>
</comment>
<comment type="pathway">
    <text evidence="2">tRNA modification; N(7)-methylguanine-tRNA biosynthesis.</text>
</comment>
<comment type="similarity">
    <text evidence="2">Belongs to the class I-like SAM-binding methyltransferase superfamily. TrmB family.</text>
</comment>
<evidence type="ECO:0000250" key="1"/>
<evidence type="ECO:0000255" key="2">
    <source>
        <dbReference type="HAMAP-Rule" id="MF_01057"/>
    </source>
</evidence>
<dbReference type="EC" id="2.1.1.33" evidence="2"/>
<dbReference type="EMBL" id="AE003849">
    <property type="protein sequence ID" value="AAF83594.1"/>
    <property type="molecule type" value="Genomic_DNA"/>
</dbReference>
<dbReference type="PIR" id="G82761">
    <property type="entry name" value="G82761"/>
</dbReference>
<dbReference type="RefSeq" id="WP_010893307.1">
    <property type="nucleotide sequence ID" value="NC_002488.3"/>
</dbReference>
<dbReference type="SMR" id="Q9PF94"/>
<dbReference type="STRING" id="160492.XF_0784"/>
<dbReference type="KEGG" id="xfa:XF_0784"/>
<dbReference type="eggNOG" id="COG0220">
    <property type="taxonomic scope" value="Bacteria"/>
</dbReference>
<dbReference type="HOGENOM" id="CLU_050910_0_1_6"/>
<dbReference type="UniPathway" id="UPA00989"/>
<dbReference type="Proteomes" id="UP000000812">
    <property type="component" value="Chromosome"/>
</dbReference>
<dbReference type="GO" id="GO:0043527">
    <property type="term" value="C:tRNA methyltransferase complex"/>
    <property type="evidence" value="ECO:0007669"/>
    <property type="project" value="TreeGrafter"/>
</dbReference>
<dbReference type="GO" id="GO:0008176">
    <property type="term" value="F:tRNA (guanine(46)-N7)-methyltransferase activity"/>
    <property type="evidence" value="ECO:0007669"/>
    <property type="project" value="UniProtKB-UniRule"/>
</dbReference>
<dbReference type="FunFam" id="3.40.50.150:FF:000035">
    <property type="entry name" value="tRNA (guanine-N(7)-)-methyltransferase"/>
    <property type="match status" value="1"/>
</dbReference>
<dbReference type="Gene3D" id="3.40.50.150">
    <property type="entry name" value="Vaccinia Virus protein VP39"/>
    <property type="match status" value="1"/>
</dbReference>
<dbReference type="HAMAP" id="MF_01057">
    <property type="entry name" value="tRNA_methyltr_TrmB"/>
    <property type="match status" value="1"/>
</dbReference>
<dbReference type="InterPro" id="IPR029063">
    <property type="entry name" value="SAM-dependent_MTases_sf"/>
</dbReference>
<dbReference type="InterPro" id="IPR003358">
    <property type="entry name" value="tRNA_(Gua-N-7)_MeTrfase_Trmb"/>
</dbReference>
<dbReference type="InterPro" id="IPR055361">
    <property type="entry name" value="tRNA_methyltr_TrmB_bact"/>
</dbReference>
<dbReference type="NCBIfam" id="TIGR00091">
    <property type="entry name" value="tRNA (guanosine(46)-N7)-methyltransferase TrmB"/>
    <property type="match status" value="1"/>
</dbReference>
<dbReference type="PANTHER" id="PTHR23417">
    <property type="entry name" value="3-DEOXY-D-MANNO-OCTULOSONIC-ACID TRANSFERASE/TRNA GUANINE-N 7 - -METHYLTRANSFERASE"/>
    <property type="match status" value="1"/>
</dbReference>
<dbReference type="PANTHER" id="PTHR23417:SF14">
    <property type="entry name" value="PENTACOTRIPEPTIDE-REPEAT REGION OF PRORP DOMAIN-CONTAINING PROTEIN"/>
    <property type="match status" value="1"/>
</dbReference>
<dbReference type="Pfam" id="PF02390">
    <property type="entry name" value="Methyltransf_4"/>
    <property type="match status" value="1"/>
</dbReference>
<dbReference type="SUPFAM" id="SSF53335">
    <property type="entry name" value="S-adenosyl-L-methionine-dependent methyltransferases"/>
    <property type="match status" value="1"/>
</dbReference>
<dbReference type="PROSITE" id="PS51625">
    <property type="entry name" value="SAM_MT_TRMB"/>
    <property type="match status" value="1"/>
</dbReference>
<sequence length="244" mass="28351">MMNLLSNDGVQVLPRPFTLNERRREVRSFVLRQGHFTPAQKRAFDHYWPRFGVDFIGQLRDLDVLFGRSAPKVLEVGFGNGAALRFAAQHEPRYDYIGIEVYAPGVGRLLNGLAEDGSRHVRLYHYDAVEVLNKEIVDGALDEIRIYFPDPWHKKRHHKRRLIQPLFATLLVRKLRVGGCLHMATDWADYAEQMWDVLDATPGLVNRAGLRGQVPCPDWRVQTRFERRGQNLGHRVWDLLYDRV</sequence>
<accession>Q9PF94</accession>
<proteinExistence type="inferred from homology"/>
<keyword id="KW-0489">Methyltransferase</keyword>
<keyword id="KW-0949">S-adenosyl-L-methionine</keyword>
<keyword id="KW-0808">Transferase</keyword>
<keyword id="KW-0819">tRNA processing</keyword>
<organism>
    <name type="scientific">Xylella fastidiosa (strain 9a5c)</name>
    <dbReference type="NCBI Taxonomy" id="160492"/>
    <lineage>
        <taxon>Bacteria</taxon>
        <taxon>Pseudomonadati</taxon>
        <taxon>Pseudomonadota</taxon>
        <taxon>Gammaproteobacteria</taxon>
        <taxon>Lysobacterales</taxon>
        <taxon>Lysobacteraceae</taxon>
        <taxon>Xylella</taxon>
    </lineage>
</organism>
<name>TRMB_XYLFA</name>
<reference key="1">
    <citation type="journal article" date="2000" name="Nature">
        <title>The genome sequence of the plant pathogen Xylella fastidiosa.</title>
        <authorList>
            <person name="Simpson A.J.G."/>
            <person name="Reinach F.C."/>
            <person name="Arruda P."/>
            <person name="Abreu F.A."/>
            <person name="Acencio M."/>
            <person name="Alvarenga R."/>
            <person name="Alves L.M.C."/>
            <person name="Araya J.E."/>
            <person name="Baia G.S."/>
            <person name="Baptista C.S."/>
            <person name="Barros M.H."/>
            <person name="Bonaccorsi E.D."/>
            <person name="Bordin S."/>
            <person name="Bove J.M."/>
            <person name="Briones M.R.S."/>
            <person name="Bueno M.R.P."/>
            <person name="Camargo A.A."/>
            <person name="Camargo L.E.A."/>
            <person name="Carraro D.M."/>
            <person name="Carrer H."/>
            <person name="Colauto N.B."/>
            <person name="Colombo C."/>
            <person name="Costa F.F."/>
            <person name="Costa M.C.R."/>
            <person name="Costa-Neto C.M."/>
            <person name="Coutinho L.L."/>
            <person name="Cristofani M."/>
            <person name="Dias-Neto E."/>
            <person name="Docena C."/>
            <person name="El-Dorry H."/>
            <person name="Facincani A.P."/>
            <person name="Ferreira A.J.S."/>
            <person name="Ferreira V.C.A."/>
            <person name="Ferro J.A."/>
            <person name="Fraga J.S."/>
            <person name="Franca S.C."/>
            <person name="Franco M.C."/>
            <person name="Frohme M."/>
            <person name="Furlan L.R."/>
            <person name="Garnier M."/>
            <person name="Goldman G.H."/>
            <person name="Goldman M.H.S."/>
            <person name="Gomes S.L."/>
            <person name="Gruber A."/>
            <person name="Ho P.L."/>
            <person name="Hoheisel J.D."/>
            <person name="Junqueira M.L."/>
            <person name="Kemper E.L."/>
            <person name="Kitajima J.P."/>
            <person name="Krieger J.E."/>
            <person name="Kuramae E.E."/>
            <person name="Laigret F."/>
            <person name="Lambais M.R."/>
            <person name="Leite L.C.C."/>
            <person name="Lemos E.G.M."/>
            <person name="Lemos M.V.F."/>
            <person name="Lopes S.A."/>
            <person name="Lopes C.R."/>
            <person name="Machado J.A."/>
            <person name="Machado M.A."/>
            <person name="Madeira A.M.B.N."/>
            <person name="Madeira H.M.F."/>
            <person name="Marino C.L."/>
            <person name="Marques M.V."/>
            <person name="Martins E.A.L."/>
            <person name="Martins E.M.F."/>
            <person name="Matsukuma A.Y."/>
            <person name="Menck C.F.M."/>
            <person name="Miracca E.C."/>
            <person name="Miyaki C.Y."/>
            <person name="Monteiro-Vitorello C.B."/>
            <person name="Moon D.H."/>
            <person name="Nagai M.A."/>
            <person name="Nascimento A.L.T.O."/>
            <person name="Netto L.E.S."/>
            <person name="Nhani A. Jr."/>
            <person name="Nobrega F.G."/>
            <person name="Nunes L.R."/>
            <person name="Oliveira M.A."/>
            <person name="de Oliveira M.C."/>
            <person name="de Oliveira R.C."/>
            <person name="Palmieri D.A."/>
            <person name="Paris A."/>
            <person name="Peixoto B.R."/>
            <person name="Pereira G.A.G."/>
            <person name="Pereira H.A. Jr."/>
            <person name="Pesquero J.B."/>
            <person name="Quaggio R.B."/>
            <person name="Roberto P.G."/>
            <person name="Rodrigues V."/>
            <person name="de Rosa A.J.M."/>
            <person name="de Rosa V.E. Jr."/>
            <person name="de Sa R.G."/>
            <person name="Santelli R.V."/>
            <person name="Sawasaki H.E."/>
            <person name="da Silva A.C.R."/>
            <person name="da Silva A.M."/>
            <person name="da Silva F.R."/>
            <person name="Silva W.A. Jr."/>
            <person name="da Silveira J.F."/>
            <person name="Silvestri M.L.Z."/>
            <person name="Siqueira W.J."/>
            <person name="de Souza A.A."/>
            <person name="de Souza A.P."/>
            <person name="Terenzi M.F."/>
            <person name="Truffi D."/>
            <person name="Tsai S.M."/>
            <person name="Tsuhako M.H."/>
            <person name="Vallada H."/>
            <person name="Van Sluys M.A."/>
            <person name="Verjovski-Almeida S."/>
            <person name="Vettore A.L."/>
            <person name="Zago M.A."/>
            <person name="Zatz M."/>
            <person name="Meidanis J."/>
            <person name="Setubal J.C."/>
        </authorList>
    </citation>
    <scope>NUCLEOTIDE SEQUENCE [LARGE SCALE GENOMIC DNA]</scope>
    <source>
        <strain>9a5c</strain>
    </source>
</reference>
<gene>
    <name evidence="2" type="primary">trmB</name>
    <name type="ordered locus">XF_0784</name>
</gene>
<feature type="chain" id="PRO_0000171426" description="tRNA (guanine-N(7)-)-methyltransferase">
    <location>
        <begin position="1"/>
        <end position="244"/>
    </location>
</feature>
<feature type="active site" evidence="1">
    <location>
        <position position="150"/>
    </location>
</feature>
<feature type="binding site" evidence="2">
    <location>
        <position position="75"/>
    </location>
    <ligand>
        <name>S-adenosyl-L-methionine</name>
        <dbReference type="ChEBI" id="CHEBI:59789"/>
    </ligand>
</feature>
<feature type="binding site" evidence="2">
    <location>
        <position position="100"/>
    </location>
    <ligand>
        <name>S-adenosyl-L-methionine</name>
        <dbReference type="ChEBI" id="CHEBI:59789"/>
    </ligand>
</feature>
<feature type="binding site" evidence="2">
    <location>
        <position position="127"/>
    </location>
    <ligand>
        <name>S-adenosyl-L-methionine</name>
        <dbReference type="ChEBI" id="CHEBI:59789"/>
    </ligand>
</feature>
<feature type="binding site" evidence="2">
    <location>
        <position position="150"/>
    </location>
    <ligand>
        <name>S-adenosyl-L-methionine</name>
        <dbReference type="ChEBI" id="CHEBI:59789"/>
    </ligand>
</feature>
<feature type="binding site" evidence="2">
    <location>
        <position position="154"/>
    </location>
    <ligand>
        <name>substrate</name>
    </ligand>
</feature>
<feature type="binding site" evidence="2">
    <location>
        <position position="186"/>
    </location>
    <ligand>
        <name>substrate</name>
    </ligand>
</feature>
<feature type="binding site" evidence="2">
    <location>
        <begin position="223"/>
        <end position="226"/>
    </location>
    <ligand>
        <name>substrate</name>
    </ligand>
</feature>
<protein>
    <recommendedName>
        <fullName evidence="2">tRNA (guanine-N(7)-)-methyltransferase</fullName>
        <ecNumber evidence="2">2.1.1.33</ecNumber>
    </recommendedName>
    <alternativeName>
        <fullName evidence="2">tRNA (guanine(46)-N(7))-methyltransferase</fullName>
    </alternativeName>
    <alternativeName>
        <fullName evidence="2">tRNA(m7G46)-methyltransferase</fullName>
    </alternativeName>
</protein>